<gene>
    <name evidence="1" type="primary">gcvH</name>
    <name type="ordered locus">LIC_10310</name>
</gene>
<proteinExistence type="inferred from homology"/>
<feature type="chain" id="PRO_0000166221" description="Glycine cleavage system H protein">
    <location>
        <begin position="1"/>
        <end position="130"/>
    </location>
</feature>
<feature type="domain" description="Lipoyl-binding" evidence="2">
    <location>
        <begin position="25"/>
        <end position="106"/>
    </location>
</feature>
<feature type="modified residue" description="N6-lipoyllysine" evidence="1">
    <location>
        <position position="66"/>
    </location>
</feature>
<comment type="function">
    <text evidence="1">The glycine cleavage system catalyzes the degradation of glycine. The H protein shuttles the methylamine group of glycine from the P protein to the T protein.</text>
</comment>
<comment type="cofactor">
    <cofactor evidence="1">
        <name>(R)-lipoate</name>
        <dbReference type="ChEBI" id="CHEBI:83088"/>
    </cofactor>
    <text evidence="1">Binds 1 lipoyl cofactor covalently.</text>
</comment>
<comment type="subunit">
    <text evidence="1">The glycine cleavage system is composed of four proteins: P, T, L and H.</text>
</comment>
<comment type="similarity">
    <text evidence="1">Belongs to the GcvH family.</text>
</comment>
<organism>
    <name type="scientific">Leptospira interrogans serogroup Icterohaemorrhagiae serovar copenhageni (strain Fiocruz L1-130)</name>
    <dbReference type="NCBI Taxonomy" id="267671"/>
    <lineage>
        <taxon>Bacteria</taxon>
        <taxon>Pseudomonadati</taxon>
        <taxon>Spirochaetota</taxon>
        <taxon>Spirochaetia</taxon>
        <taxon>Leptospirales</taxon>
        <taxon>Leptospiraceae</taxon>
        <taxon>Leptospira</taxon>
    </lineage>
</organism>
<dbReference type="EMBL" id="AE016823">
    <property type="protein sequence ID" value="AAS68937.1"/>
    <property type="molecule type" value="Genomic_DNA"/>
</dbReference>
<dbReference type="RefSeq" id="WP_000852369.1">
    <property type="nucleotide sequence ID" value="NC_005823.1"/>
</dbReference>
<dbReference type="SMR" id="Q72VI7"/>
<dbReference type="GeneID" id="61143665"/>
<dbReference type="KEGG" id="lic:LIC_10310"/>
<dbReference type="HOGENOM" id="CLU_097408_2_2_12"/>
<dbReference type="Proteomes" id="UP000007037">
    <property type="component" value="Chromosome I"/>
</dbReference>
<dbReference type="GO" id="GO:0005829">
    <property type="term" value="C:cytosol"/>
    <property type="evidence" value="ECO:0007669"/>
    <property type="project" value="TreeGrafter"/>
</dbReference>
<dbReference type="GO" id="GO:0005960">
    <property type="term" value="C:glycine cleavage complex"/>
    <property type="evidence" value="ECO:0007669"/>
    <property type="project" value="InterPro"/>
</dbReference>
<dbReference type="GO" id="GO:0019464">
    <property type="term" value="P:glycine decarboxylation via glycine cleavage system"/>
    <property type="evidence" value="ECO:0007669"/>
    <property type="project" value="UniProtKB-UniRule"/>
</dbReference>
<dbReference type="CDD" id="cd06848">
    <property type="entry name" value="GCS_H"/>
    <property type="match status" value="1"/>
</dbReference>
<dbReference type="Gene3D" id="2.40.50.100">
    <property type="match status" value="1"/>
</dbReference>
<dbReference type="HAMAP" id="MF_00272">
    <property type="entry name" value="GcvH"/>
    <property type="match status" value="1"/>
</dbReference>
<dbReference type="InterPro" id="IPR003016">
    <property type="entry name" value="2-oxoA_DH_lipoyl-BS"/>
</dbReference>
<dbReference type="InterPro" id="IPR000089">
    <property type="entry name" value="Biotin_lipoyl"/>
</dbReference>
<dbReference type="InterPro" id="IPR002930">
    <property type="entry name" value="GCV_H"/>
</dbReference>
<dbReference type="InterPro" id="IPR033753">
    <property type="entry name" value="GCV_H/Fam206"/>
</dbReference>
<dbReference type="InterPro" id="IPR017453">
    <property type="entry name" value="GCV_H_sub"/>
</dbReference>
<dbReference type="InterPro" id="IPR011053">
    <property type="entry name" value="Single_hybrid_motif"/>
</dbReference>
<dbReference type="NCBIfam" id="TIGR00527">
    <property type="entry name" value="gcvH"/>
    <property type="match status" value="1"/>
</dbReference>
<dbReference type="NCBIfam" id="NF002270">
    <property type="entry name" value="PRK01202.1"/>
    <property type="match status" value="1"/>
</dbReference>
<dbReference type="PANTHER" id="PTHR11715">
    <property type="entry name" value="GLYCINE CLEAVAGE SYSTEM H PROTEIN"/>
    <property type="match status" value="1"/>
</dbReference>
<dbReference type="PANTHER" id="PTHR11715:SF3">
    <property type="entry name" value="GLYCINE CLEAVAGE SYSTEM H PROTEIN-RELATED"/>
    <property type="match status" value="1"/>
</dbReference>
<dbReference type="Pfam" id="PF01597">
    <property type="entry name" value="GCV_H"/>
    <property type="match status" value="1"/>
</dbReference>
<dbReference type="SUPFAM" id="SSF51230">
    <property type="entry name" value="Single hybrid motif"/>
    <property type="match status" value="1"/>
</dbReference>
<dbReference type="PROSITE" id="PS50968">
    <property type="entry name" value="BIOTINYL_LIPOYL"/>
    <property type="match status" value="1"/>
</dbReference>
<dbReference type="PROSITE" id="PS00189">
    <property type="entry name" value="LIPOYL"/>
    <property type="match status" value="1"/>
</dbReference>
<keyword id="KW-0450">Lipoyl</keyword>
<protein>
    <recommendedName>
        <fullName evidence="1">Glycine cleavage system H protein</fullName>
    </recommendedName>
</protein>
<sequence length="130" mass="14118">MAETQAPTGYLFSEKHEWVKVEGDMALIGISDFAQSALGDIVFVDLPKTGKNIKQFETFGTIESVKAAEDLYAPIGGEVIESNSALSKNPGDVNSKPFDSWMIKVKGFSTSELDKLLTPEKYKALVAGLE</sequence>
<evidence type="ECO:0000255" key="1">
    <source>
        <dbReference type="HAMAP-Rule" id="MF_00272"/>
    </source>
</evidence>
<evidence type="ECO:0000255" key="2">
    <source>
        <dbReference type="PROSITE-ProRule" id="PRU01066"/>
    </source>
</evidence>
<accession>Q72VI7</accession>
<name>GCSH_LEPIC</name>
<reference key="1">
    <citation type="journal article" date="2004" name="J. Bacteriol.">
        <title>Comparative genomics of two Leptospira interrogans serovars reveals novel insights into physiology and pathogenesis.</title>
        <authorList>
            <person name="Nascimento A.L.T.O."/>
            <person name="Ko A.I."/>
            <person name="Martins E.A.L."/>
            <person name="Monteiro-Vitorello C.B."/>
            <person name="Ho P.L."/>
            <person name="Haake D.A."/>
            <person name="Verjovski-Almeida S."/>
            <person name="Hartskeerl R.A."/>
            <person name="Marques M.V."/>
            <person name="Oliveira M.C."/>
            <person name="Menck C.F.M."/>
            <person name="Leite L.C.C."/>
            <person name="Carrer H."/>
            <person name="Coutinho L.L."/>
            <person name="Degrave W.M."/>
            <person name="Dellagostin O.A."/>
            <person name="El-Dorry H."/>
            <person name="Ferro E.S."/>
            <person name="Ferro M.I.T."/>
            <person name="Furlan L.R."/>
            <person name="Gamberini M."/>
            <person name="Giglioti E.A."/>
            <person name="Goes-Neto A."/>
            <person name="Goldman G.H."/>
            <person name="Goldman M.H.S."/>
            <person name="Harakava R."/>
            <person name="Jeronimo S.M.B."/>
            <person name="Junqueira-de-Azevedo I.L.M."/>
            <person name="Kimura E.T."/>
            <person name="Kuramae E.E."/>
            <person name="Lemos E.G.M."/>
            <person name="Lemos M.V.F."/>
            <person name="Marino C.L."/>
            <person name="Nunes L.R."/>
            <person name="de Oliveira R.C."/>
            <person name="Pereira G.G."/>
            <person name="Reis M.S."/>
            <person name="Schriefer A."/>
            <person name="Siqueira W.J."/>
            <person name="Sommer P."/>
            <person name="Tsai S.M."/>
            <person name="Simpson A.J.G."/>
            <person name="Ferro J.A."/>
            <person name="Camargo L.E.A."/>
            <person name="Kitajima J.P."/>
            <person name="Setubal J.C."/>
            <person name="Van Sluys M.A."/>
        </authorList>
    </citation>
    <scope>NUCLEOTIDE SEQUENCE [LARGE SCALE GENOMIC DNA]</scope>
    <source>
        <strain>Fiocruz L1-130</strain>
    </source>
</reference>